<name>GNAT1_ARATH</name>
<dbReference type="EC" id="2.3.1.48" evidence="4 7"/>
<dbReference type="EC" id="2.3.1.87" evidence="4 6"/>
<dbReference type="EMBL" id="AC079829">
    <property type="protein sequence ID" value="AAG50691.1"/>
    <property type="molecule type" value="Genomic_DNA"/>
</dbReference>
<dbReference type="EMBL" id="CP002684">
    <property type="protein sequence ID" value="AEE30662.1"/>
    <property type="molecule type" value="Genomic_DNA"/>
</dbReference>
<dbReference type="EMBL" id="AK117820">
    <property type="protein sequence ID" value="BAC42462.1"/>
    <property type="molecule type" value="mRNA"/>
</dbReference>
<dbReference type="EMBL" id="BT005218">
    <property type="protein sequence ID" value="AAO63282.1"/>
    <property type="molecule type" value="mRNA"/>
</dbReference>
<dbReference type="PIR" id="D86388">
    <property type="entry name" value="D86388"/>
</dbReference>
<dbReference type="RefSeq" id="NP_173946.1">
    <property type="nucleotide sequence ID" value="NM_102386.2"/>
</dbReference>
<dbReference type="SMR" id="Q9C666"/>
<dbReference type="FunCoup" id="Q9C666">
    <property type="interactions" value="20"/>
</dbReference>
<dbReference type="IntAct" id="Q9C666">
    <property type="interactions" value="1"/>
</dbReference>
<dbReference type="STRING" id="3702.Q9C666"/>
<dbReference type="PaxDb" id="3702-AT1G26220.1"/>
<dbReference type="ProteomicsDB" id="193620"/>
<dbReference type="EnsemblPlants" id="AT1G26220.1">
    <property type="protein sequence ID" value="AT1G26220.1"/>
    <property type="gene ID" value="AT1G26220"/>
</dbReference>
<dbReference type="GeneID" id="839163"/>
<dbReference type="Gramene" id="AT1G26220.1">
    <property type="protein sequence ID" value="AT1G26220.1"/>
    <property type="gene ID" value="AT1G26220"/>
</dbReference>
<dbReference type="KEGG" id="ath:AT1G26220"/>
<dbReference type="Araport" id="AT1G26220"/>
<dbReference type="TAIR" id="AT1G26220">
    <property type="gene designation" value="SNAT2"/>
</dbReference>
<dbReference type="eggNOG" id="ENOG502RZ2D">
    <property type="taxonomic scope" value="Eukaryota"/>
</dbReference>
<dbReference type="HOGENOM" id="CLU_086503_0_2_1"/>
<dbReference type="InParanoid" id="Q9C666"/>
<dbReference type="OMA" id="FARCTGD"/>
<dbReference type="OrthoDB" id="2744543at2759"/>
<dbReference type="PRO" id="PR:Q9C666"/>
<dbReference type="Proteomes" id="UP000006548">
    <property type="component" value="Chromosome 1"/>
</dbReference>
<dbReference type="ExpressionAtlas" id="Q9C666">
    <property type="expression patterns" value="baseline and differential"/>
</dbReference>
<dbReference type="GO" id="GO:0009507">
    <property type="term" value="C:chloroplast"/>
    <property type="evidence" value="ECO:0000314"/>
    <property type="project" value="TAIR"/>
</dbReference>
<dbReference type="GO" id="GO:0004059">
    <property type="term" value="F:aralkylamine N-acetyltransferase activity"/>
    <property type="evidence" value="ECO:0000314"/>
    <property type="project" value="UniProtKB"/>
</dbReference>
<dbReference type="GO" id="GO:0008080">
    <property type="term" value="F:N-acetyltransferase activity"/>
    <property type="evidence" value="ECO:0000314"/>
    <property type="project" value="UniProtKB"/>
</dbReference>
<dbReference type="GO" id="GO:0030187">
    <property type="term" value="P:melatonin biosynthetic process"/>
    <property type="evidence" value="ECO:0000314"/>
    <property type="project" value="UniProtKB"/>
</dbReference>
<dbReference type="GO" id="GO:0006474">
    <property type="term" value="P:N-terminal protein amino acid acetylation"/>
    <property type="evidence" value="ECO:0000314"/>
    <property type="project" value="UniProtKB"/>
</dbReference>
<dbReference type="GO" id="GO:0018394">
    <property type="term" value="P:peptidyl-lysine acetylation"/>
    <property type="evidence" value="ECO:0000314"/>
    <property type="project" value="UniProtKB"/>
</dbReference>
<dbReference type="GO" id="GO:2000028">
    <property type="term" value="P:regulation of photoperiodism, flowering"/>
    <property type="evidence" value="ECO:0000315"/>
    <property type="project" value="UniProtKB"/>
</dbReference>
<dbReference type="CDD" id="cd04301">
    <property type="entry name" value="NAT_SF"/>
    <property type="match status" value="1"/>
</dbReference>
<dbReference type="FunFam" id="3.40.630.30:FF:000059">
    <property type="entry name" value="Putative acetyltransferase NSI"/>
    <property type="match status" value="1"/>
</dbReference>
<dbReference type="Gene3D" id="3.40.630.30">
    <property type="match status" value="1"/>
</dbReference>
<dbReference type="InterPro" id="IPR016181">
    <property type="entry name" value="Acyl_CoA_acyltransferase"/>
</dbReference>
<dbReference type="InterPro" id="IPR000182">
    <property type="entry name" value="GNAT_dom"/>
</dbReference>
<dbReference type="InterPro" id="IPR045039">
    <property type="entry name" value="NSI-like"/>
</dbReference>
<dbReference type="PANTHER" id="PTHR43626">
    <property type="entry name" value="ACYL-COA N-ACYLTRANSFERASE"/>
    <property type="match status" value="1"/>
</dbReference>
<dbReference type="PANTHER" id="PTHR43626:SF1">
    <property type="entry name" value="GCN5-RELATED N-ACETYLTRANSFERASE 1, CHLOROPLASTIC"/>
    <property type="match status" value="1"/>
</dbReference>
<dbReference type="Pfam" id="PF00583">
    <property type="entry name" value="Acetyltransf_1"/>
    <property type="match status" value="1"/>
</dbReference>
<dbReference type="SUPFAM" id="SSF55729">
    <property type="entry name" value="Acyl-CoA N-acyltransferases (Nat)"/>
    <property type="match status" value="1"/>
</dbReference>
<dbReference type="PROSITE" id="PS51186">
    <property type="entry name" value="GNAT"/>
    <property type="match status" value="1"/>
</dbReference>
<sequence>MFLGGTISTPPASLRLRSTLNPQNAVTQSSSQATFPAAMQRKPPSYSISDEDLESRGFLLRRTTEGLNLDQLNSVFAAVGFPRRDTAKIEVALQHTDALLWVEYEKTRRPVAFARATGDGVFNAIIWDVVVDPSFQSCGLGKAVMERLIEDLQVKGICNIALYSEPRVLGFYRPLGFVSDPDGIKGMVFIRKQRNKK</sequence>
<keyword id="KW-0012">Acyltransferase</keyword>
<keyword id="KW-0150">Chloroplast</keyword>
<keyword id="KW-0934">Plastid</keyword>
<keyword id="KW-1185">Reference proteome</keyword>
<keyword id="KW-0808">Transferase</keyword>
<keyword id="KW-0809">Transit peptide</keyword>
<comment type="function">
    <text evidence="6 7">Protein acetyltransferase with dual specificity triggering both N-alpha-acetylation (NTA) and epsilon-lysine acetylation (KA), possibly with a low efficiency or toward specific plastid substrates (PubMed:32633465). Involved in melatonin biosynthesis by catalyzing the formation of N-acetylserotonin (NAS) from serotonin and of melatonin (N-acetyl-5-methoxytryptamine) from 5-methoxytryptamine (5-MT) (PubMed:31698875).</text>
</comment>
<comment type="catalytic activity">
    <reaction evidence="1">
        <text>an N-terminal L-alpha-aminoacyl-[protein] + acetyl-CoA = N-terminal N(alpha)-acetyl-L-alpha-aminoacyl-[protein] + CoA + H(+)</text>
        <dbReference type="Rhea" id="RHEA:21028"/>
        <dbReference type="Rhea" id="RHEA-COMP:10636"/>
        <dbReference type="Rhea" id="RHEA-COMP:15589"/>
        <dbReference type="ChEBI" id="CHEBI:15378"/>
        <dbReference type="ChEBI" id="CHEBI:57287"/>
        <dbReference type="ChEBI" id="CHEBI:57288"/>
        <dbReference type="ChEBI" id="CHEBI:78597"/>
        <dbReference type="ChEBI" id="CHEBI:78598"/>
    </reaction>
</comment>
<comment type="catalytic activity">
    <reaction evidence="7">
        <text>L-lysyl-[protein] + acetyl-CoA = N(6)-acetyl-L-lysyl-[protein] + CoA + H(+)</text>
        <dbReference type="Rhea" id="RHEA:45948"/>
        <dbReference type="Rhea" id="RHEA-COMP:9752"/>
        <dbReference type="Rhea" id="RHEA-COMP:10731"/>
        <dbReference type="ChEBI" id="CHEBI:15378"/>
        <dbReference type="ChEBI" id="CHEBI:29969"/>
        <dbReference type="ChEBI" id="CHEBI:57287"/>
        <dbReference type="ChEBI" id="CHEBI:57288"/>
        <dbReference type="ChEBI" id="CHEBI:61930"/>
        <dbReference type="EC" id="2.3.1.48"/>
    </reaction>
</comment>
<comment type="catalytic activity">
    <reaction evidence="6">
        <text>5-methoxytryptamine + acetyl-CoA = melatonin + CoA + H(+)</text>
        <dbReference type="Rhea" id="RHEA:66144"/>
        <dbReference type="ChEBI" id="CHEBI:15378"/>
        <dbReference type="ChEBI" id="CHEBI:16796"/>
        <dbReference type="ChEBI" id="CHEBI:57287"/>
        <dbReference type="ChEBI" id="CHEBI:57288"/>
        <dbReference type="ChEBI" id="CHEBI:166874"/>
    </reaction>
</comment>
<comment type="catalytic activity">
    <reaction evidence="6">
        <text>serotonin + acetyl-CoA = N-acetylserotonin + CoA + H(+)</text>
        <dbReference type="Rhea" id="RHEA:25217"/>
        <dbReference type="ChEBI" id="CHEBI:15378"/>
        <dbReference type="ChEBI" id="CHEBI:17697"/>
        <dbReference type="ChEBI" id="CHEBI:57287"/>
        <dbReference type="ChEBI" id="CHEBI:57288"/>
        <dbReference type="ChEBI" id="CHEBI:350546"/>
        <dbReference type="EC" id="2.3.1.87"/>
    </reaction>
</comment>
<comment type="activity regulation">
    <text evidence="6">Inhibited by 5-methoxytryptamine in vitro.</text>
</comment>
<comment type="biophysicochemical properties">
    <kinetics>
        <KM evidence="6">232 uM for serotonin</KM>
        <KM evidence="6">630 uM for 5-methoxytryptamine</KM>
        <Vmax evidence="6">2160.0 pmol/min/mg enzyme with serotonin as substrate</Vmax>
        <Vmax evidence="6">3360.0 pmol/min/mg enzyme with 5-methoxytryptamine as substrate</Vmax>
    </kinetics>
    <phDependence>
        <text evidence="6">Optimum pH is 7.8.</text>
    </phDependence>
    <temperatureDependence>
        <text evidence="6">Optimum temperature is 45-55 degrees Celsius. Thermostable, retaining 30 percent of its peak activity at 95 degrees Celsius.</text>
    </temperatureDependence>
</comment>
<comment type="subunit">
    <text evidence="1">Oligomer.</text>
</comment>
<comment type="subcellular location">
    <subcellularLocation>
        <location evidence="6 7">Plastid</location>
        <location evidence="6 7">Chloroplast</location>
    </subcellularLocation>
</comment>
<comment type="tissue specificity">
    <text evidence="6 7">Expressed in green tissues (PubMed:32633465). Accumulates mainly in flowers and young leaves, and, to a lower extent, in stems and mature leaves, but barely in roots (PubMed:31698875).</text>
</comment>
<comment type="PTM">
    <text evidence="7">Autoacetylated.</text>
</comment>
<comment type="disruption phenotype">
    <text evidence="6">Reduced melatonin content in flowers but not in leaves, reduced leaf area and biomass, and delayed flowering probably due to lower expression level of ent-kaurene synthase (KS) and FLOWERING LOCUS T (FT).</text>
</comment>
<comment type="similarity">
    <text evidence="10">Belongs to the acetyltransferase family. GNAT subfamily.</text>
</comment>
<reference key="1">
    <citation type="journal article" date="2000" name="Nature">
        <title>Sequence and analysis of chromosome 1 of the plant Arabidopsis thaliana.</title>
        <authorList>
            <person name="Theologis A."/>
            <person name="Ecker J.R."/>
            <person name="Palm C.J."/>
            <person name="Federspiel N.A."/>
            <person name="Kaul S."/>
            <person name="White O."/>
            <person name="Alonso J."/>
            <person name="Altafi H."/>
            <person name="Araujo R."/>
            <person name="Bowman C.L."/>
            <person name="Brooks S.Y."/>
            <person name="Buehler E."/>
            <person name="Chan A."/>
            <person name="Chao Q."/>
            <person name="Chen H."/>
            <person name="Cheuk R.F."/>
            <person name="Chin C.W."/>
            <person name="Chung M.K."/>
            <person name="Conn L."/>
            <person name="Conway A.B."/>
            <person name="Conway A.R."/>
            <person name="Creasy T.H."/>
            <person name="Dewar K."/>
            <person name="Dunn P."/>
            <person name="Etgu P."/>
            <person name="Feldblyum T.V."/>
            <person name="Feng J.-D."/>
            <person name="Fong B."/>
            <person name="Fujii C.Y."/>
            <person name="Gill J.E."/>
            <person name="Goldsmith A.D."/>
            <person name="Haas B."/>
            <person name="Hansen N.F."/>
            <person name="Hughes B."/>
            <person name="Huizar L."/>
            <person name="Hunter J.L."/>
            <person name="Jenkins J."/>
            <person name="Johnson-Hopson C."/>
            <person name="Khan S."/>
            <person name="Khaykin E."/>
            <person name="Kim C.J."/>
            <person name="Koo H.L."/>
            <person name="Kremenetskaia I."/>
            <person name="Kurtz D.B."/>
            <person name="Kwan A."/>
            <person name="Lam B."/>
            <person name="Langin-Hooper S."/>
            <person name="Lee A."/>
            <person name="Lee J.M."/>
            <person name="Lenz C.A."/>
            <person name="Li J.H."/>
            <person name="Li Y.-P."/>
            <person name="Lin X."/>
            <person name="Liu S.X."/>
            <person name="Liu Z.A."/>
            <person name="Luros J.S."/>
            <person name="Maiti R."/>
            <person name="Marziali A."/>
            <person name="Militscher J."/>
            <person name="Miranda M."/>
            <person name="Nguyen M."/>
            <person name="Nierman W.C."/>
            <person name="Osborne B.I."/>
            <person name="Pai G."/>
            <person name="Peterson J."/>
            <person name="Pham P.K."/>
            <person name="Rizzo M."/>
            <person name="Rooney T."/>
            <person name="Rowley D."/>
            <person name="Sakano H."/>
            <person name="Salzberg S.L."/>
            <person name="Schwartz J.R."/>
            <person name="Shinn P."/>
            <person name="Southwick A.M."/>
            <person name="Sun H."/>
            <person name="Tallon L.J."/>
            <person name="Tambunga G."/>
            <person name="Toriumi M.J."/>
            <person name="Town C.D."/>
            <person name="Utterback T."/>
            <person name="Van Aken S."/>
            <person name="Vaysberg M."/>
            <person name="Vysotskaia V.S."/>
            <person name="Walker M."/>
            <person name="Wu D."/>
            <person name="Yu G."/>
            <person name="Fraser C.M."/>
            <person name="Venter J.C."/>
            <person name="Davis R.W."/>
        </authorList>
    </citation>
    <scope>NUCLEOTIDE SEQUENCE [LARGE SCALE GENOMIC DNA]</scope>
    <source>
        <strain>cv. Columbia</strain>
    </source>
</reference>
<reference key="2">
    <citation type="journal article" date="2017" name="Plant J.">
        <title>Araport11: a complete reannotation of the Arabidopsis thaliana reference genome.</title>
        <authorList>
            <person name="Cheng C.Y."/>
            <person name="Krishnakumar V."/>
            <person name="Chan A.P."/>
            <person name="Thibaud-Nissen F."/>
            <person name="Schobel S."/>
            <person name="Town C.D."/>
        </authorList>
    </citation>
    <scope>GENOME REANNOTATION</scope>
    <source>
        <strain>cv. Columbia</strain>
    </source>
</reference>
<reference key="3">
    <citation type="journal article" date="2002" name="Science">
        <title>Functional annotation of a full-length Arabidopsis cDNA collection.</title>
        <authorList>
            <person name="Seki M."/>
            <person name="Narusaka M."/>
            <person name="Kamiya A."/>
            <person name="Ishida J."/>
            <person name="Satou M."/>
            <person name="Sakurai T."/>
            <person name="Nakajima M."/>
            <person name="Enju A."/>
            <person name="Akiyama K."/>
            <person name="Oono Y."/>
            <person name="Muramatsu M."/>
            <person name="Hayashizaki Y."/>
            <person name="Kawai J."/>
            <person name="Carninci P."/>
            <person name="Itoh M."/>
            <person name="Ishii Y."/>
            <person name="Arakawa T."/>
            <person name="Shibata K."/>
            <person name="Shinagawa A."/>
            <person name="Shinozaki K."/>
        </authorList>
    </citation>
    <scope>NUCLEOTIDE SEQUENCE [LARGE SCALE MRNA]</scope>
    <source>
        <strain>cv. Columbia</strain>
    </source>
</reference>
<reference key="4">
    <citation type="journal article" date="2003" name="Science">
        <title>Empirical analysis of transcriptional activity in the Arabidopsis genome.</title>
        <authorList>
            <person name="Yamada K."/>
            <person name="Lim J."/>
            <person name="Dale J.M."/>
            <person name="Chen H."/>
            <person name="Shinn P."/>
            <person name="Palm C.J."/>
            <person name="Southwick A.M."/>
            <person name="Wu H.C."/>
            <person name="Kim C.J."/>
            <person name="Nguyen M."/>
            <person name="Pham P.K."/>
            <person name="Cheuk R.F."/>
            <person name="Karlin-Newmann G."/>
            <person name="Liu S.X."/>
            <person name="Lam B."/>
            <person name="Sakano H."/>
            <person name="Wu T."/>
            <person name="Yu G."/>
            <person name="Miranda M."/>
            <person name="Quach H.L."/>
            <person name="Tripp M."/>
            <person name="Chang C.H."/>
            <person name="Lee J.M."/>
            <person name="Toriumi M.J."/>
            <person name="Chan M.M."/>
            <person name="Tang C.C."/>
            <person name="Onodera C.S."/>
            <person name="Deng J.M."/>
            <person name="Akiyama K."/>
            <person name="Ansari Y."/>
            <person name="Arakawa T."/>
            <person name="Banh J."/>
            <person name="Banno F."/>
            <person name="Bowser L."/>
            <person name="Brooks S.Y."/>
            <person name="Carninci P."/>
            <person name="Chao Q."/>
            <person name="Choy N."/>
            <person name="Enju A."/>
            <person name="Goldsmith A.D."/>
            <person name="Gurjal M."/>
            <person name="Hansen N.F."/>
            <person name="Hayashizaki Y."/>
            <person name="Johnson-Hopson C."/>
            <person name="Hsuan V.W."/>
            <person name="Iida K."/>
            <person name="Karnes M."/>
            <person name="Khan S."/>
            <person name="Koesema E."/>
            <person name="Ishida J."/>
            <person name="Jiang P.X."/>
            <person name="Jones T."/>
            <person name="Kawai J."/>
            <person name="Kamiya A."/>
            <person name="Meyers C."/>
            <person name="Nakajima M."/>
            <person name="Narusaka M."/>
            <person name="Seki M."/>
            <person name="Sakurai T."/>
            <person name="Satou M."/>
            <person name="Tamse R."/>
            <person name="Vaysberg M."/>
            <person name="Wallender E.K."/>
            <person name="Wong C."/>
            <person name="Yamamura Y."/>
            <person name="Yuan S."/>
            <person name="Shinozaki K."/>
            <person name="Davis R.W."/>
            <person name="Theologis A."/>
            <person name="Ecker J.R."/>
        </authorList>
    </citation>
    <scope>NUCLEOTIDE SEQUENCE [LARGE SCALE MRNA]</scope>
    <source>
        <strain>cv. Columbia</strain>
    </source>
</reference>
<reference key="5">
    <citation type="journal article" date="2019" name="Biomolecules">
        <title>Knockout of Arabidopsis serotonin N-acetyltransferase-2 reduces melatonin levels and delays flowering.</title>
        <authorList>
            <person name="Lee H.Y."/>
            <person name="Lee K."/>
            <person name="Back K."/>
        </authorList>
    </citation>
    <scope>FUNCTION</scope>
    <scope>DISRUPTION PHENOTYPE</scope>
    <scope>CATALYTIC ACTIVITY</scope>
    <scope>ACTIVITY REGULATION</scope>
    <scope>TISSUE SPECIFICITY</scope>
    <scope>BIOPHYSICOCHEMICAL PROPERTIES</scope>
    <scope>SUBCELLULAR LOCATION</scope>
    <source>
        <strain>cv. Columbia</strain>
    </source>
</reference>
<reference key="6">
    <citation type="journal article" date="2020" name="Mol. Syst. Biol.">
        <title>Dual lysine and N-terminal acetyltransferases reveal the complexity underpinning protein acetylation.</title>
        <authorList>
            <person name="Bienvenut W.V."/>
            <person name="Bruenje A."/>
            <person name="Boyer J.-B."/>
            <person name="Muehlenbeck J.S."/>
            <person name="Bernal G."/>
            <person name="Lassowskat I."/>
            <person name="Dian C."/>
            <person name="Linster E."/>
            <person name="Dinh T.V."/>
            <person name="Koskela M.M."/>
            <person name="Jung V."/>
            <person name="Seidel J."/>
            <person name="Schyrba L.K."/>
            <person name="Ivanauskaite A."/>
            <person name="Eirich J."/>
            <person name="Hell R."/>
            <person name="Schwarzer D."/>
            <person name="Mulo P."/>
            <person name="Wirtz M."/>
            <person name="Meinnel T."/>
            <person name="Giglione C."/>
            <person name="Finkemeier I."/>
        </authorList>
    </citation>
    <scope>FUNCTION</scope>
    <scope>CATALYTIC ACTIVITY</scope>
    <scope>SUBCELLULAR LOCATION</scope>
    <scope>TISSUE SPECIFICITY</scope>
    <scope>AUTOACETYLATION</scope>
    <scope>GENE FAMILY</scope>
    <scope>NOMENCLATURE</scope>
    <source>
        <strain>cv. Columbia</strain>
    </source>
</reference>
<gene>
    <name evidence="8" type="primary">SNAT2</name>
    <name evidence="9" type="synonym">GNAT1</name>
    <name evidence="11" type="ordered locus">At1g26220</name>
    <name evidence="12" type="ORF">F28B23.27</name>
</gene>
<proteinExistence type="evidence at protein level"/>
<organism>
    <name type="scientific">Arabidopsis thaliana</name>
    <name type="common">Mouse-ear cress</name>
    <dbReference type="NCBI Taxonomy" id="3702"/>
    <lineage>
        <taxon>Eukaryota</taxon>
        <taxon>Viridiplantae</taxon>
        <taxon>Streptophyta</taxon>
        <taxon>Embryophyta</taxon>
        <taxon>Tracheophyta</taxon>
        <taxon>Spermatophyta</taxon>
        <taxon>Magnoliopsida</taxon>
        <taxon>eudicotyledons</taxon>
        <taxon>Gunneridae</taxon>
        <taxon>Pentapetalae</taxon>
        <taxon>rosids</taxon>
        <taxon>malvids</taxon>
        <taxon>Brassicales</taxon>
        <taxon>Brassicaceae</taxon>
        <taxon>Camelineae</taxon>
        <taxon>Arabidopsis</taxon>
    </lineage>
</organism>
<protein>
    <recommendedName>
        <fullName evidence="9">GCN5-related N-acetyltransferase 1, chloroplastic</fullName>
        <ecNumber evidence="4 7">2.3.1.48</ecNumber>
    </recommendedName>
    <alternativeName>
        <fullName evidence="8">Serotonin N-acetyl transferase 2</fullName>
        <shortName evidence="8">AtSNAT2</shortName>
        <ecNumber evidence="4 6">2.3.1.87</ecNumber>
    </alternativeName>
</protein>
<evidence type="ECO:0000250" key="1">
    <source>
        <dbReference type="UniProtKB" id="Q7X9V3"/>
    </source>
</evidence>
<evidence type="ECO:0000250" key="2">
    <source>
        <dbReference type="UniProtKB" id="Q96F10"/>
    </source>
</evidence>
<evidence type="ECO:0000255" key="3"/>
<evidence type="ECO:0000255" key="4">
    <source>
        <dbReference type="PROSITE-ProRule" id="PRU00532"/>
    </source>
</evidence>
<evidence type="ECO:0000256" key="5">
    <source>
        <dbReference type="SAM" id="MobiDB-lite"/>
    </source>
</evidence>
<evidence type="ECO:0000269" key="6">
    <source>
    </source>
</evidence>
<evidence type="ECO:0000269" key="7">
    <source>
    </source>
</evidence>
<evidence type="ECO:0000303" key="8">
    <source>
    </source>
</evidence>
<evidence type="ECO:0000303" key="9">
    <source>
    </source>
</evidence>
<evidence type="ECO:0000305" key="10"/>
<evidence type="ECO:0000312" key="11">
    <source>
        <dbReference type="Araport" id="AT1G26220"/>
    </source>
</evidence>
<evidence type="ECO:0000312" key="12">
    <source>
        <dbReference type="EMBL" id="AAG50691.1"/>
    </source>
</evidence>
<feature type="transit peptide" description="Chloroplast" evidence="3">
    <location>
        <begin position="1"/>
        <end position="37"/>
    </location>
</feature>
<feature type="chain" id="PRO_0000457951" description="GCN5-related N-acetyltransferase 1, chloroplastic">
    <location>
        <begin position="38"/>
        <end position="197"/>
    </location>
</feature>
<feature type="domain" description="N-acetyltransferase" evidence="4">
    <location>
        <begin position="58"/>
        <end position="195"/>
    </location>
</feature>
<feature type="region of interest" description="Disordered" evidence="5">
    <location>
        <begin position="23"/>
        <end position="46"/>
    </location>
</feature>
<feature type="compositionally biased region" description="Polar residues" evidence="5">
    <location>
        <begin position="23"/>
        <end position="34"/>
    </location>
</feature>
<feature type="active site" description="Proton donor" evidence="2">
    <location>
        <position position="172"/>
    </location>
</feature>
<feature type="binding site" evidence="2">
    <location>
        <begin position="129"/>
        <end position="131"/>
    </location>
    <ligand>
        <name>acetyl-CoA</name>
        <dbReference type="ChEBI" id="CHEBI:57288"/>
    </ligand>
</feature>
<feature type="binding site" evidence="2">
    <location>
        <begin position="137"/>
        <end position="142"/>
    </location>
    <ligand>
        <name>acetyl-CoA</name>
        <dbReference type="ChEBI" id="CHEBI:57288"/>
    </ligand>
</feature>
<feature type="binding site" evidence="2">
    <location>
        <begin position="165"/>
        <end position="167"/>
    </location>
    <ligand>
        <name>acetyl-CoA</name>
        <dbReference type="ChEBI" id="CHEBI:57288"/>
    </ligand>
</feature>
<feature type="binding site" evidence="2">
    <location>
        <position position="172"/>
    </location>
    <ligand>
        <name>acetyl-CoA</name>
        <dbReference type="ChEBI" id="CHEBI:57288"/>
    </ligand>
</feature>
<accession>Q9C666</accession>